<reference key="1">
    <citation type="journal article" date="2000" name="Science">
        <title>Molecular evidence for the early evolution of photosynthesis.</title>
        <authorList>
            <person name="Xiong J."/>
            <person name="Fischer W.M."/>
            <person name="Inoue K."/>
            <person name="Nakahara M."/>
            <person name="Bauer C.E."/>
        </authorList>
    </citation>
    <scope>NUCLEOTIDE SEQUENCE [GENOMIC DNA]</scope>
</reference>
<reference key="2">
    <citation type="journal article" date="2011" name="BMC Genomics">
        <title>Complete genome sequence of the filamentous anoxygenic phototrophic bacterium Chloroflexus aurantiacus.</title>
        <authorList>
            <person name="Tang K.H."/>
            <person name="Barry K."/>
            <person name="Chertkov O."/>
            <person name="Dalin E."/>
            <person name="Han C.S."/>
            <person name="Hauser L.J."/>
            <person name="Honchak B.M."/>
            <person name="Karbach L.E."/>
            <person name="Land M.L."/>
            <person name="Lapidus A."/>
            <person name="Larimer F.W."/>
            <person name="Mikhailova N."/>
            <person name="Pitluck S."/>
            <person name="Pierson B.K."/>
            <person name="Blankenship R.E."/>
        </authorList>
    </citation>
    <scope>NUCLEOTIDE SEQUENCE [LARGE SCALE GENOMIC DNA]</scope>
    <source>
        <strain>ATCC 29366 / DSM 635 / J-10-fl</strain>
    </source>
</reference>
<organism>
    <name type="scientific">Chloroflexus aurantiacus (strain ATCC 29366 / DSM 635 / J-10-fl)</name>
    <dbReference type="NCBI Taxonomy" id="324602"/>
    <lineage>
        <taxon>Bacteria</taxon>
        <taxon>Bacillati</taxon>
        <taxon>Chloroflexota</taxon>
        <taxon>Chloroflexia</taxon>
        <taxon>Chloroflexales</taxon>
        <taxon>Chloroflexineae</taxon>
        <taxon>Chloroflexaceae</taxon>
        <taxon>Chloroflexus</taxon>
    </lineage>
</organism>
<proteinExistence type="inferred from homology"/>
<dbReference type="EC" id="1.3.7.7" evidence="1"/>
<dbReference type="EMBL" id="AF288460">
    <property type="protein sequence ID" value="AAG15210.1"/>
    <property type="molecule type" value="Genomic_DNA"/>
</dbReference>
<dbReference type="EMBL" id="CP000909">
    <property type="protein sequence ID" value="ABY35762.1"/>
    <property type="molecule type" value="Genomic_DNA"/>
</dbReference>
<dbReference type="RefSeq" id="WP_012258415.1">
    <property type="nucleotide sequence ID" value="NC_010175.1"/>
</dbReference>
<dbReference type="RefSeq" id="YP_001636151.1">
    <property type="nucleotide sequence ID" value="NC_010175.1"/>
</dbReference>
<dbReference type="SMR" id="Q9F6X5"/>
<dbReference type="STRING" id="324602.Caur_2556"/>
<dbReference type="EnsemblBacteria" id="ABY35762">
    <property type="protein sequence ID" value="ABY35762"/>
    <property type="gene ID" value="Caur_2556"/>
</dbReference>
<dbReference type="KEGG" id="cau:Caur_2556"/>
<dbReference type="PATRIC" id="fig|324602.8.peg.2881"/>
<dbReference type="eggNOG" id="COG2710">
    <property type="taxonomic scope" value="Bacteria"/>
</dbReference>
<dbReference type="HOGENOM" id="CLU_025470_0_0_0"/>
<dbReference type="InParanoid" id="Q9F6X5"/>
<dbReference type="UniPathway" id="UPA00671"/>
<dbReference type="Proteomes" id="UP000002008">
    <property type="component" value="Chromosome"/>
</dbReference>
<dbReference type="GO" id="GO:0051539">
    <property type="term" value="F:4 iron, 4 sulfur cluster binding"/>
    <property type="evidence" value="ECO:0007669"/>
    <property type="project" value="UniProtKB-UniRule"/>
</dbReference>
<dbReference type="GO" id="GO:0005524">
    <property type="term" value="F:ATP binding"/>
    <property type="evidence" value="ECO:0007669"/>
    <property type="project" value="UniProtKB-UniRule"/>
</dbReference>
<dbReference type="GO" id="GO:0046872">
    <property type="term" value="F:metal ion binding"/>
    <property type="evidence" value="ECO:0007669"/>
    <property type="project" value="UniProtKB-KW"/>
</dbReference>
<dbReference type="GO" id="GO:0016730">
    <property type="term" value="F:oxidoreductase activity, acting on iron-sulfur proteins as donors"/>
    <property type="evidence" value="ECO:0007669"/>
    <property type="project" value="InterPro"/>
</dbReference>
<dbReference type="GO" id="GO:0016636">
    <property type="term" value="F:oxidoreductase activity, acting on the CH-CH group of donors, iron-sulfur protein as acceptor"/>
    <property type="evidence" value="ECO:0007669"/>
    <property type="project" value="UniProtKB-UniRule"/>
</dbReference>
<dbReference type="GO" id="GO:0036070">
    <property type="term" value="P:light-independent bacteriochlorophyll biosynthetic process"/>
    <property type="evidence" value="ECO:0007669"/>
    <property type="project" value="UniProtKB-UniRule"/>
</dbReference>
<dbReference type="GO" id="GO:0019685">
    <property type="term" value="P:photosynthesis, dark reaction"/>
    <property type="evidence" value="ECO:0007669"/>
    <property type="project" value="InterPro"/>
</dbReference>
<dbReference type="CDD" id="cd01981">
    <property type="entry name" value="Pchlide_reductase_B"/>
    <property type="match status" value="1"/>
</dbReference>
<dbReference type="Gene3D" id="1.20.89.20">
    <property type="match status" value="1"/>
</dbReference>
<dbReference type="Gene3D" id="3.40.50.1980">
    <property type="entry name" value="Nitrogenase molybdenum iron protein domain"/>
    <property type="match status" value="3"/>
</dbReference>
<dbReference type="Gene3D" id="1.10.8.550">
    <property type="entry name" value="Proto-chlorophyllide reductase 57 kD subunit B"/>
    <property type="match status" value="1"/>
</dbReference>
<dbReference type="HAMAP" id="MF_00353">
    <property type="entry name" value="ChlB_BchB"/>
    <property type="match status" value="1"/>
</dbReference>
<dbReference type="InterPro" id="IPR050152">
    <property type="entry name" value="ChlB/BchB/BchZ"/>
</dbReference>
<dbReference type="InterPro" id="IPR013580">
    <property type="entry name" value="LI-POR_suB-like_C"/>
</dbReference>
<dbReference type="InterPro" id="IPR000510">
    <property type="entry name" value="Nase/OxRdtase_comp1"/>
</dbReference>
<dbReference type="InterPro" id="IPR042298">
    <property type="entry name" value="P-CP_red_C"/>
</dbReference>
<dbReference type="InterPro" id="IPR005969">
    <property type="entry name" value="Protochl_reductB"/>
</dbReference>
<dbReference type="InterPro" id="IPR016209">
    <property type="entry name" value="Protochlorophyllide_Rdtase"/>
</dbReference>
<dbReference type="NCBIfam" id="TIGR01278">
    <property type="entry name" value="DPOR_BchB"/>
    <property type="match status" value="1"/>
</dbReference>
<dbReference type="NCBIfam" id="NF002789">
    <property type="entry name" value="PRK02910.1-3"/>
    <property type="match status" value="1"/>
</dbReference>
<dbReference type="PANTHER" id="PTHR33712">
    <property type="entry name" value="LIGHT-INDEPENDENT PROTOCHLOROPHYLLIDE REDUCTASE SUBUNIT B"/>
    <property type="match status" value="1"/>
</dbReference>
<dbReference type="PANTHER" id="PTHR33712:SF7">
    <property type="entry name" value="LIGHT-INDEPENDENT PROTOCHLOROPHYLLIDE REDUCTASE SUBUNIT B"/>
    <property type="match status" value="1"/>
</dbReference>
<dbReference type="Pfam" id="PF00148">
    <property type="entry name" value="Oxidored_nitro"/>
    <property type="match status" value="1"/>
</dbReference>
<dbReference type="Pfam" id="PF08369">
    <property type="entry name" value="PCP_red"/>
    <property type="match status" value="1"/>
</dbReference>
<dbReference type="PIRSF" id="PIRSF000163">
    <property type="entry name" value="PCP_ChlB"/>
    <property type="match status" value="1"/>
</dbReference>
<dbReference type="SUPFAM" id="SSF53807">
    <property type="entry name" value="Helical backbone' metal receptor"/>
    <property type="match status" value="1"/>
</dbReference>
<comment type="function">
    <text evidence="1">Component of the dark-operative protochlorophyllide reductase (DPOR) that uses Mg-ATP and reduced ferredoxin to reduce ring D of protochlorophyllide (Pchlide) to form chlorophyllide a (Chlide). This reaction is light-independent. The NB-protein (BchN-BchB) is the catalytic component of the complex.</text>
</comment>
<comment type="catalytic activity">
    <reaction evidence="1">
        <text>chlorophyllide a + oxidized 2[4Fe-4S]-[ferredoxin] + 2 ADP + 2 phosphate = protochlorophyllide a + reduced 2[4Fe-4S]-[ferredoxin] + 2 ATP + 2 H2O</text>
        <dbReference type="Rhea" id="RHEA:28202"/>
        <dbReference type="Rhea" id="RHEA-COMP:10002"/>
        <dbReference type="Rhea" id="RHEA-COMP:10004"/>
        <dbReference type="ChEBI" id="CHEBI:15377"/>
        <dbReference type="ChEBI" id="CHEBI:30616"/>
        <dbReference type="ChEBI" id="CHEBI:33722"/>
        <dbReference type="ChEBI" id="CHEBI:33723"/>
        <dbReference type="ChEBI" id="CHEBI:43474"/>
        <dbReference type="ChEBI" id="CHEBI:83348"/>
        <dbReference type="ChEBI" id="CHEBI:83350"/>
        <dbReference type="ChEBI" id="CHEBI:456216"/>
        <dbReference type="EC" id="1.3.7.7"/>
    </reaction>
</comment>
<comment type="cofactor">
    <cofactor evidence="1">
        <name>[4Fe-4S] cluster</name>
        <dbReference type="ChEBI" id="CHEBI:49883"/>
    </cofactor>
    <text evidence="1">Binds 1 [4Fe-4S] cluster per heterodimer. The cluster is bound at the heterodimer interface by residues from both subunits.</text>
</comment>
<comment type="pathway">
    <text evidence="1">Porphyrin-containing compound metabolism; bacteriochlorophyll biosynthesis (light-independent).</text>
</comment>
<comment type="subunit">
    <text evidence="1">Protochlorophyllide reductase is composed of three subunits; BchL, BchN and BchB. Forms a heterotetramer of two BchB and two BchN subunits.</text>
</comment>
<comment type="similarity">
    <text evidence="1">Belongs to the ChlB/BchB/BchZ family.</text>
</comment>
<accession>Q9F6X5</accession>
<accession>A9WIN5</accession>
<evidence type="ECO:0000255" key="1">
    <source>
        <dbReference type="HAMAP-Rule" id="MF_00353"/>
    </source>
</evidence>
<keyword id="KW-0004">4Fe-4S</keyword>
<keyword id="KW-0067">ATP-binding</keyword>
<keyword id="KW-0077">Bacteriochlorophyll biosynthesis</keyword>
<keyword id="KW-0149">Chlorophyll biosynthesis</keyword>
<keyword id="KW-0408">Iron</keyword>
<keyword id="KW-0411">Iron-sulfur</keyword>
<keyword id="KW-0479">Metal-binding</keyword>
<keyword id="KW-0547">Nucleotide-binding</keyword>
<keyword id="KW-0560">Oxidoreductase</keyword>
<keyword id="KW-0602">Photosynthesis</keyword>
<keyword id="KW-1185">Reference proteome</keyword>
<gene>
    <name evidence="1" type="primary">bchB</name>
    <name type="ordered locus">Caur_2556</name>
</gene>
<name>BCHB_CHLAA</name>
<protein>
    <recommendedName>
        <fullName evidence="1">Light-independent protochlorophyllide reductase subunit B</fullName>
        <shortName evidence="1">DPOR subunit B</shortName>
        <shortName evidence="1">LI-POR subunit B</shortName>
        <ecNumber evidence="1">1.3.7.7</ecNumber>
    </recommendedName>
</protein>
<feature type="chain" id="PRO_0000219797" description="Light-independent protochlorophyllide reductase subunit B">
    <location>
        <begin position="1"/>
        <end position="541"/>
    </location>
</feature>
<feature type="active site" description="Proton donor" evidence="1">
    <location>
        <position position="286"/>
    </location>
</feature>
<feature type="binding site" evidence="1">
    <location>
        <position position="36"/>
    </location>
    <ligand>
        <name>[4Fe-4S] cluster</name>
        <dbReference type="ChEBI" id="CHEBI:49883"/>
        <note>ligand shared with heterodimeric partner</note>
    </ligand>
</feature>
<feature type="binding site" evidence="1">
    <location>
        <begin position="421"/>
        <end position="422"/>
    </location>
    <ligand>
        <name>substrate</name>
    </ligand>
</feature>
<sequence>MRLAYWMYEGTAHHGVGRIANSMRNVHAVFHAPQGDDYVNAIFAMLDRTPNFPAMTTSVVSGTDLARGTIRLPDTLRQVEERVHPDLIVVVASCSTILLQENLEIAAQHAGLQCEVMVYDANPYRMQEIVAAESLFTDLVKRFAKPQPRTERPTVNILGPASLGFHARHDLISLRRMLKTLGLEVNVVAPWGASIADLRRLPAAWLTIAPYRELGLRAAIYLEEQFGVPALLDAPIGVQPTLRWIERLRELLAQAGADVPMPPLTAFSLDGMSAPSAVPWFARTADMDSFSGKPAFVFGDATHVVGVTRFLRDELGMPIAGAGTYVKHQADWVREQLTGYVDEVLVTDEFQVVADRIAALRPELVCGTQMERHTSRRYDLNCMVISPPTHIENHLLAYRPFLGFDGADVIADEVYTTCTLGMEKHLIDLFGDAGLDLPEKTERTPVAEPAPVAATVESPQPQNEPAIAVASAPSLTSAPATPTPAAVVDPVWAADAEAMLKKVPFFVRGRVRGNVEKYARQRGHAVITAEVLLAAKEELGA</sequence>